<accession>Q8WVI0</accession>
<proteinExistence type="evidence at protein level"/>
<reference key="1">
    <citation type="journal article" date="2006" name="Nature">
        <title>The DNA sequence, annotation and analysis of human chromosome 3.</title>
        <authorList>
            <person name="Muzny D.M."/>
            <person name="Scherer S.E."/>
            <person name="Kaul R."/>
            <person name="Wang J."/>
            <person name="Yu J."/>
            <person name="Sudbrak R."/>
            <person name="Buhay C.J."/>
            <person name="Chen R."/>
            <person name="Cree A."/>
            <person name="Ding Y."/>
            <person name="Dugan-Rocha S."/>
            <person name="Gill R."/>
            <person name="Gunaratne P."/>
            <person name="Harris R.A."/>
            <person name="Hawes A.C."/>
            <person name="Hernandez J."/>
            <person name="Hodgson A.V."/>
            <person name="Hume J."/>
            <person name="Jackson A."/>
            <person name="Khan Z.M."/>
            <person name="Kovar-Smith C."/>
            <person name="Lewis L.R."/>
            <person name="Lozado R.J."/>
            <person name="Metzker M.L."/>
            <person name="Milosavljevic A."/>
            <person name="Miner G.R."/>
            <person name="Morgan M.B."/>
            <person name="Nazareth L.V."/>
            <person name="Scott G."/>
            <person name="Sodergren E."/>
            <person name="Song X.-Z."/>
            <person name="Steffen D."/>
            <person name="Wei S."/>
            <person name="Wheeler D.A."/>
            <person name="Wright M.W."/>
            <person name="Worley K.C."/>
            <person name="Yuan Y."/>
            <person name="Zhang Z."/>
            <person name="Adams C.Q."/>
            <person name="Ansari-Lari M.A."/>
            <person name="Ayele M."/>
            <person name="Brown M.J."/>
            <person name="Chen G."/>
            <person name="Chen Z."/>
            <person name="Clendenning J."/>
            <person name="Clerc-Blankenburg K.P."/>
            <person name="Chen R."/>
            <person name="Chen Z."/>
            <person name="Davis C."/>
            <person name="Delgado O."/>
            <person name="Dinh H.H."/>
            <person name="Dong W."/>
            <person name="Draper H."/>
            <person name="Ernst S."/>
            <person name="Fu G."/>
            <person name="Gonzalez-Garay M.L."/>
            <person name="Garcia D.K."/>
            <person name="Gillett W."/>
            <person name="Gu J."/>
            <person name="Hao B."/>
            <person name="Haugen E."/>
            <person name="Havlak P."/>
            <person name="He X."/>
            <person name="Hennig S."/>
            <person name="Hu S."/>
            <person name="Huang W."/>
            <person name="Jackson L.R."/>
            <person name="Jacob L.S."/>
            <person name="Kelly S.H."/>
            <person name="Kube M."/>
            <person name="Levy R."/>
            <person name="Li Z."/>
            <person name="Liu B."/>
            <person name="Liu J."/>
            <person name="Liu W."/>
            <person name="Lu J."/>
            <person name="Maheshwari M."/>
            <person name="Nguyen B.-V."/>
            <person name="Okwuonu G.O."/>
            <person name="Palmeiri A."/>
            <person name="Pasternak S."/>
            <person name="Perez L.M."/>
            <person name="Phelps K.A."/>
            <person name="Plopper F.J."/>
            <person name="Qiang B."/>
            <person name="Raymond C."/>
            <person name="Rodriguez R."/>
            <person name="Saenphimmachak C."/>
            <person name="Santibanez J."/>
            <person name="Shen H."/>
            <person name="Shen Y."/>
            <person name="Subramanian S."/>
            <person name="Tabor P.E."/>
            <person name="Verduzco D."/>
            <person name="Waldron L."/>
            <person name="Wang J."/>
            <person name="Wang J."/>
            <person name="Wang Q."/>
            <person name="Williams G.A."/>
            <person name="Wong G.K.-S."/>
            <person name="Yao Z."/>
            <person name="Zhang J."/>
            <person name="Zhang X."/>
            <person name="Zhao G."/>
            <person name="Zhou J."/>
            <person name="Zhou Y."/>
            <person name="Nelson D."/>
            <person name="Lehrach H."/>
            <person name="Reinhardt R."/>
            <person name="Naylor S.L."/>
            <person name="Yang H."/>
            <person name="Olson M."/>
            <person name="Weinstock G."/>
            <person name="Gibbs R.A."/>
        </authorList>
    </citation>
    <scope>NUCLEOTIDE SEQUENCE [LARGE SCALE GENOMIC DNA]</scope>
</reference>
<reference key="2">
    <citation type="journal article" date="2004" name="Genome Res.">
        <title>The status, quality, and expansion of the NIH full-length cDNA project: the Mammalian Gene Collection (MGC).</title>
        <authorList>
            <consortium name="The MGC Project Team"/>
        </authorList>
    </citation>
    <scope>NUCLEOTIDE SEQUENCE [LARGE SCALE MRNA]</scope>
    <source>
        <tissue>Skin</tissue>
    </source>
</reference>
<reference key="3">
    <citation type="journal article" date="2011" name="BMC Syst. Biol.">
        <title>Initial characterization of the human central proteome.</title>
        <authorList>
            <person name="Burkard T.R."/>
            <person name="Planyavsky M."/>
            <person name="Kaupe I."/>
            <person name="Breitwieser F.P."/>
            <person name="Buerckstuemmer T."/>
            <person name="Bennett K.L."/>
            <person name="Superti-Furga G."/>
            <person name="Colinge J."/>
        </authorList>
    </citation>
    <scope>IDENTIFICATION BY MASS SPECTROMETRY [LARGE SCALE ANALYSIS]</scope>
</reference>
<reference key="4">
    <citation type="journal article" date="2021" name="Elife">
        <title>Defining the interactome of the human mitochondrial ribosome identifies SMIM4 and TMEM223 as respiratory chain assembly factors.</title>
        <authorList>
            <person name="Dennerlein S."/>
            <person name="Poerschke S."/>
            <person name="Oeljeklaus S."/>
            <person name="Wang C."/>
            <person name="Richter-Dennerlein R."/>
            <person name="Sattmann J."/>
            <person name="Bauermeister D."/>
            <person name="Hanitsch E."/>
            <person name="Stoldt S."/>
            <person name="Langer T."/>
            <person name="Jakobs S."/>
            <person name="Warscheid B."/>
            <person name="Rehling P."/>
        </authorList>
    </citation>
    <scope>FUNCTION</scope>
    <scope>SUBCELLULAR LOCATION</scope>
    <scope>TOPOLOGY</scope>
    <scope>INTERACTION WITH MITOCHONDRIAL RIBOSOME AND UQCC6</scope>
</reference>
<gene>
    <name evidence="7" type="primary">UQCC5</name>
    <name evidence="7" type="synonym">C3orf78</name>
    <name evidence="4" type="synonym">SMIM4</name>
</gene>
<sequence>MFTRAQVRRILQRVPGKQRFGIYRFLPFFFVLGGTMEWIMIKVRVGQETFYDVYRRKASERQYQRRLEDE</sequence>
<comment type="function">
    <text evidence="1 3">Required for the assembly and stability of the mitochondrial ubiquinol-cytochrome c reductase complex (complex III (CIII) or cytochrome b-c1 complex), a multisubunit transmembrane complex that is part of the mitochondrial electron transport chain (ETC) which drives oxidative phosphorylation (By similarity). Mediates early complex III biogenesis (By similarity). Participates in regulating the levels of electron transport chain proteins, and therefore energy supply, in response to changes in energy demand (By similarity). Also involved in the first steps of cytochrome c oxidase complex (complex IV) assembly (PubMed:34969438).</text>
</comment>
<comment type="subunit">
    <text evidence="1 3">Associates with the mitochondrial ribosome (PubMed:34969438). Interacts with UQCC6 (PubMed:34969438). Interacts with MT-CYB; interacts with newly synthesizes MT-CYB (PubMed:34969438). Forms a complex, named COMB/coordinator of mitochondrial CYTB biogenesis, composed of UQCC1, UQCC2, UQCC4, UQCC5 and UQCC6; regulates MT-CYB synthesis and promotes its membrane insertion (By similarity).</text>
</comment>
<comment type="subcellular location">
    <subcellularLocation>
        <location evidence="3">Mitochondrion inner membrane</location>
        <topology evidence="2">Single-pass membrane protein</topology>
    </subcellularLocation>
</comment>
<comment type="similarity">
    <text evidence="5">Belongs to the UQCC5 family.</text>
</comment>
<comment type="sequence caution" evidence="5">
    <conflict type="erroneous initiation">
        <sequence resource="EMBL-CDS" id="AAH17996"/>
    </conflict>
    <text>Extended N-terminus.</text>
</comment>
<name>UQCC5_HUMAN</name>
<organism evidence="8">
    <name type="scientific">Homo sapiens</name>
    <name type="common">Human</name>
    <dbReference type="NCBI Taxonomy" id="9606"/>
    <lineage>
        <taxon>Eukaryota</taxon>
        <taxon>Metazoa</taxon>
        <taxon>Chordata</taxon>
        <taxon>Craniata</taxon>
        <taxon>Vertebrata</taxon>
        <taxon>Euteleostomi</taxon>
        <taxon>Mammalia</taxon>
        <taxon>Eutheria</taxon>
        <taxon>Euarchontoglires</taxon>
        <taxon>Primates</taxon>
        <taxon>Haplorrhini</taxon>
        <taxon>Catarrhini</taxon>
        <taxon>Hominidae</taxon>
        <taxon>Homo</taxon>
    </lineage>
</organism>
<evidence type="ECO:0000250" key="1">
    <source>
        <dbReference type="UniProtKB" id="Q8C1Q6"/>
    </source>
</evidence>
<evidence type="ECO:0000255" key="2"/>
<evidence type="ECO:0000269" key="3">
    <source>
    </source>
</evidence>
<evidence type="ECO:0000303" key="4">
    <source>
    </source>
</evidence>
<evidence type="ECO:0000305" key="5"/>
<evidence type="ECO:0000305" key="6">
    <source>
    </source>
</evidence>
<evidence type="ECO:0000312" key="7">
    <source>
        <dbReference type="HGNC" id="HGNC:37257"/>
    </source>
</evidence>
<evidence type="ECO:0000312" key="8">
    <source>
        <dbReference type="Proteomes" id="UP000005640"/>
    </source>
</evidence>
<feature type="chain" id="PRO_0000349243" description="Ubiquinol-cytochrome c reductase complex assembly factor 5">
    <location>
        <begin position="1"/>
        <end position="70"/>
    </location>
</feature>
<feature type="topological domain" description="Mitochondrial matrix" evidence="6">
    <location>
        <begin position="1"/>
        <end position="19"/>
    </location>
</feature>
<feature type="transmembrane region" description="Helical" evidence="2">
    <location>
        <begin position="20"/>
        <end position="41"/>
    </location>
</feature>
<feature type="topological domain" description="Mitochondrial intermembrane" evidence="6">
    <location>
        <begin position="42"/>
        <end position="70"/>
    </location>
</feature>
<keyword id="KW-0472">Membrane</keyword>
<keyword id="KW-0496">Mitochondrion</keyword>
<keyword id="KW-0999">Mitochondrion inner membrane</keyword>
<keyword id="KW-1267">Proteomics identification</keyword>
<keyword id="KW-1185">Reference proteome</keyword>
<keyword id="KW-0812">Transmembrane</keyword>
<keyword id="KW-1133">Transmembrane helix</keyword>
<dbReference type="EMBL" id="AC112215">
    <property type="status" value="NOT_ANNOTATED_CDS"/>
    <property type="molecule type" value="Genomic_DNA"/>
</dbReference>
<dbReference type="EMBL" id="BC017996">
    <property type="protein sequence ID" value="AAH17996.1"/>
    <property type="status" value="ALT_INIT"/>
    <property type="molecule type" value="mRNA"/>
</dbReference>
<dbReference type="CCDS" id="CCDS46844.1"/>
<dbReference type="RefSeq" id="NP_001118239.1">
    <property type="nucleotide sequence ID" value="NM_001124767.2"/>
</dbReference>
<dbReference type="RefSeq" id="XP_054202548.1">
    <property type="nucleotide sequence ID" value="XM_054346573.1"/>
</dbReference>
<dbReference type="SMR" id="Q8WVI0"/>
<dbReference type="BioGRID" id="137030">
    <property type="interactions" value="5"/>
</dbReference>
<dbReference type="FunCoup" id="Q8WVI0">
    <property type="interactions" value="203"/>
</dbReference>
<dbReference type="IntAct" id="Q8WVI0">
    <property type="interactions" value="2"/>
</dbReference>
<dbReference type="STRING" id="9606.ENSP00000417806"/>
<dbReference type="iPTMnet" id="Q8WVI0"/>
<dbReference type="PhosphoSitePlus" id="Q8WVI0"/>
<dbReference type="BioMuta" id="SMIM4"/>
<dbReference type="jPOST" id="Q8WVI0"/>
<dbReference type="MassIVE" id="Q8WVI0"/>
<dbReference type="PaxDb" id="9606-ENSP00000417806"/>
<dbReference type="PeptideAtlas" id="Q8WVI0"/>
<dbReference type="ProteomicsDB" id="74795"/>
<dbReference type="Pumba" id="Q8WVI0"/>
<dbReference type="TopDownProteomics" id="Q8WVI0"/>
<dbReference type="Antibodypedia" id="64270">
    <property type="antibodies" value="36 antibodies from 6 providers"/>
</dbReference>
<dbReference type="DNASU" id="440957"/>
<dbReference type="Ensembl" id="ENST00000477703.6">
    <property type="protein sequence ID" value="ENSP00000417806.1"/>
    <property type="gene ID" value="ENSG00000168273.8"/>
</dbReference>
<dbReference type="GeneID" id="440957"/>
<dbReference type="KEGG" id="hsa:440957"/>
<dbReference type="MANE-Select" id="ENST00000477703.6">
    <property type="protein sequence ID" value="ENSP00000417806.1"/>
    <property type="RefSeq nucleotide sequence ID" value="NM_001124767.2"/>
    <property type="RefSeq protein sequence ID" value="NP_001118239.1"/>
</dbReference>
<dbReference type="UCSC" id="uc003dep.3">
    <property type="organism name" value="human"/>
</dbReference>
<dbReference type="AGR" id="HGNC:37257"/>
<dbReference type="CTD" id="440957"/>
<dbReference type="DisGeNET" id="440957"/>
<dbReference type="GeneCards" id="UQCC5"/>
<dbReference type="HGNC" id="HGNC:37257">
    <property type="gene designation" value="UQCC5"/>
</dbReference>
<dbReference type="HPA" id="ENSG00000168273">
    <property type="expression patterns" value="Tissue enhanced (adrenal gland, skeletal muscle)"/>
</dbReference>
<dbReference type="MIM" id="620435">
    <property type="type" value="gene"/>
</dbReference>
<dbReference type="neXtProt" id="NX_Q8WVI0"/>
<dbReference type="OpenTargets" id="ENSG00000168273"/>
<dbReference type="PharmGKB" id="PA165696922"/>
<dbReference type="VEuPathDB" id="HostDB:ENSG00000168273"/>
<dbReference type="eggNOG" id="ENOG502S80C">
    <property type="taxonomic scope" value="Eukaryota"/>
</dbReference>
<dbReference type="GeneTree" id="ENSGT00390000013390"/>
<dbReference type="HOGENOM" id="CLU_187276_1_0_1"/>
<dbReference type="InParanoid" id="Q8WVI0"/>
<dbReference type="OMA" id="MEWFMIK"/>
<dbReference type="OrthoDB" id="5913955at2759"/>
<dbReference type="PAN-GO" id="Q8WVI0">
    <property type="GO annotations" value="0 GO annotations based on evolutionary models"/>
</dbReference>
<dbReference type="PhylomeDB" id="Q8WVI0"/>
<dbReference type="TreeFam" id="TF324402"/>
<dbReference type="PathwayCommons" id="Q8WVI0"/>
<dbReference type="Reactome" id="R-HSA-9865881">
    <property type="pathway name" value="Complex III assembly"/>
</dbReference>
<dbReference type="SignaLink" id="Q8WVI0"/>
<dbReference type="BioGRID-ORCS" id="440957">
    <property type="hits" value="13 hits in 1145 CRISPR screens"/>
</dbReference>
<dbReference type="ChiTaRS" id="SMIM4">
    <property type="organism name" value="human"/>
</dbReference>
<dbReference type="GenomeRNAi" id="440957"/>
<dbReference type="Pharos" id="Q8WVI0">
    <property type="development level" value="Tdark"/>
</dbReference>
<dbReference type="PRO" id="PR:Q8WVI0"/>
<dbReference type="Proteomes" id="UP000005640">
    <property type="component" value="Chromosome 3"/>
</dbReference>
<dbReference type="RNAct" id="Q8WVI0">
    <property type="molecule type" value="protein"/>
</dbReference>
<dbReference type="Bgee" id="ENSG00000168273">
    <property type="expression patterns" value="Expressed in left adrenal gland cortex and 130 other cell types or tissues"/>
</dbReference>
<dbReference type="ExpressionAtlas" id="Q8WVI0">
    <property type="expression patterns" value="baseline and differential"/>
</dbReference>
<dbReference type="GO" id="GO:0005743">
    <property type="term" value="C:mitochondrial inner membrane"/>
    <property type="evidence" value="ECO:0000314"/>
    <property type="project" value="UniProtKB"/>
</dbReference>
<dbReference type="GO" id="GO:0005739">
    <property type="term" value="C:mitochondrion"/>
    <property type="evidence" value="ECO:0006056"/>
    <property type="project" value="FlyBase"/>
</dbReference>
<dbReference type="GO" id="GO:0097177">
    <property type="term" value="F:mitochondrial ribosome binding"/>
    <property type="evidence" value="ECO:0000314"/>
    <property type="project" value="UniProtKB"/>
</dbReference>
<dbReference type="GO" id="GO:0033617">
    <property type="term" value="P:mitochondrial cytochrome c oxidase assembly"/>
    <property type="evidence" value="ECO:0000314"/>
    <property type="project" value="UniProtKB"/>
</dbReference>
<dbReference type="GO" id="GO:0034551">
    <property type="term" value="P:mitochondrial respiratory chain complex III assembly"/>
    <property type="evidence" value="ECO:0000250"/>
    <property type="project" value="UniProtKB"/>
</dbReference>
<dbReference type="InterPro" id="IPR028183">
    <property type="entry name" value="UQCC5"/>
</dbReference>
<dbReference type="PANTHER" id="PTHR35250">
    <property type="entry name" value="SMALL INTEGRAL MEMBRANE PROTEIN 4"/>
    <property type="match status" value="1"/>
</dbReference>
<dbReference type="PANTHER" id="PTHR35250:SF1">
    <property type="entry name" value="UBIQUINOL-CYTOCHROME-C REDUCTASE COMPLEX ASSEMBLY FACTOR 5"/>
    <property type="match status" value="1"/>
</dbReference>
<dbReference type="Pfam" id="PF15114">
    <property type="entry name" value="UPF0640"/>
    <property type="match status" value="1"/>
</dbReference>
<protein>
    <recommendedName>
        <fullName evidence="5">Ubiquinol-cytochrome c reductase complex assembly factor 5</fullName>
    </recommendedName>
    <alternativeName>
        <fullName evidence="5">Small integral membrane protein 4</fullName>
    </alternativeName>
</protein>